<evidence type="ECO:0000255" key="1">
    <source>
        <dbReference type="HAMAP-Rule" id="MF_02081"/>
    </source>
</evidence>
<protein>
    <recommendedName>
        <fullName evidence="1">Peptidoglycan D,D-transpeptidase MrdA</fullName>
        <ecNumber evidence="1">3.4.16.4</ecNumber>
    </recommendedName>
    <alternativeName>
        <fullName evidence="1">Penicillin-binding protein 2</fullName>
        <shortName evidence="1">PBP-2</shortName>
    </alternativeName>
</protein>
<reference key="1">
    <citation type="journal article" date="2001" name="Nature">
        <title>Genome sequence of enterohaemorrhagic Escherichia coli O157:H7.</title>
        <authorList>
            <person name="Perna N.T."/>
            <person name="Plunkett G. III"/>
            <person name="Burland V."/>
            <person name="Mau B."/>
            <person name="Glasner J.D."/>
            <person name="Rose D.J."/>
            <person name="Mayhew G.F."/>
            <person name="Evans P.S."/>
            <person name="Gregor J."/>
            <person name="Kirkpatrick H.A."/>
            <person name="Posfai G."/>
            <person name="Hackett J."/>
            <person name="Klink S."/>
            <person name="Boutin A."/>
            <person name="Shao Y."/>
            <person name="Miller L."/>
            <person name="Grotbeck E.J."/>
            <person name="Davis N.W."/>
            <person name="Lim A."/>
            <person name="Dimalanta E.T."/>
            <person name="Potamousis K."/>
            <person name="Apodaca J."/>
            <person name="Anantharaman T.S."/>
            <person name="Lin J."/>
            <person name="Yen G."/>
            <person name="Schwartz D.C."/>
            <person name="Welch R.A."/>
            <person name="Blattner F.R."/>
        </authorList>
    </citation>
    <scope>NUCLEOTIDE SEQUENCE [LARGE SCALE GENOMIC DNA]</scope>
    <source>
        <strain>O157:H7 / EDL933 / ATCC 700927 / EHEC</strain>
    </source>
</reference>
<reference key="2">
    <citation type="journal article" date="2001" name="DNA Res.">
        <title>Complete genome sequence of enterohemorrhagic Escherichia coli O157:H7 and genomic comparison with a laboratory strain K-12.</title>
        <authorList>
            <person name="Hayashi T."/>
            <person name="Makino K."/>
            <person name="Ohnishi M."/>
            <person name="Kurokawa K."/>
            <person name="Ishii K."/>
            <person name="Yokoyama K."/>
            <person name="Han C.-G."/>
            <person name="Ohtsubo E."/>
            <person name="Nakayama K."/>
            <person name="Murata T."/>
            <person name="Tanaka M."/>
            <person name="Tobe T."/>
            <person name="Iida T."/>
            <person name="Takami H."/>
            <person name="Honda T."/>
            <person name="Sasakawa C."/>
            <person name="Ogasawara N."/>
            <person name="Yasunaga T."/>
            <person name="Kuhara S."/>
            <person name="Shiba T."/>
            <person name="Hattori M."/>
            <person name="Shinagawa H."/>
        </authorList>
    </citation>
    <scope>NUCLEOTIDE SEQUENCE [LARGE SCALE GENOMIC DNA]</scope>
    <source>
        <strain>O157:H7 / Sakai / RIMD 0509952 / EHEC</strain>
    </source>
</reference>
<comment type="function">
    <text evidence="1">Catalyzes cross-linking of the peptidoglycan cell wall.</text>
</comment>
<comment type="catalytic activity">
    <reaction evidence="1">
        <text>Preferential cleavage: (Ac)2-L-Lys-D-Ala-|-D-Ala. Also transpeptidation of peptidyl-alanyl moieties that are N-acyl substituents of D-alanine.</text>
        <dbReference type="EC" id="3.4.16.4"/>
    </reaction>
</comment>
<comment type="pathway">
    <text evidence="1">Cell wall biogenesis; peptidoglycan biosynthesis.</text>
</comment>
<comment type="subcellular location">
    <subcellularLocation>
        <location evidence="1">Cell inner membrane</location>
        <topology evidence="1">Single-pass membrane protein</topology>
    </subcellularLocation>
</comment>
<comment type="similarity">
    <text evidence="1">Belongs to the transpeptidase family. MrdA subfamily.</text>
</comment>
<feature type="chain" id="PRO_0000195445" description="Peptidoglycan D,D-transpeptidase MrdA">
    <location>
        <begin position="1"/>
        <end position="633"/>
    </location>
</feature>
<feature type="transmembrane region" description="Helical" evidence="1">
    <location>
        <begin position="22"/>
        <end position="42"/>
    </location>
</feature>
<feature type="active site" description="Acyl-ester intermediate" evidence="1">
    <location>
        <position position="330"/>
    </location>
</feature>
<organism>
    <name type="scientific">Escherichia coli O157:H7</name>
    <dbReference type="NCBI Taxonomy" id="83334"/>
    <lineage>
        <taxon>Bacteria</taxon>
        <taxon>Pseudomonadati</taxon>
        <taxon>Pseudomonadota</taxon>
        <taxon>Gammaproteobacteria</taxon>
        <taxon>Enterobacterales</taxon>
        <taxon>Enterobacteriaceae</taxon>
        <taxon>Escherichia</taxon>
    </lineage>
</organism>
<proteinExistence type="inferred from homology"/>
<accession>P0AD67</accession>
<accession>P08150</accession>
<dbReference type="EC" id="3.4.16.4" evidence="1"/>
<dbReference type="EMBL" id="AE005174">
    <property type="protein sequence ID" value="AAG54969.1"/>
    <property type="molecule type" value="Genomic_DNA"/>
</dbReference>
<dbReference type="EMBL" id="BA000007">
    <property type="protein sequence ID" value="BAB34096.1"/>
    <property type="molecule type" value="Genomic_DNA"/>
</dbReference>
<dbReference type="PIR" id="A90713">
    <property type="entry name" value="A90713"/>
</dbReference>
<dbReference type="PIR" id="E85563">
    <property type="entry name" value="E85563"/>
</dbReference>
<dbReference type="RefSeq" id="NP_308700.1">
    <property type="nucleotide sequence ID" value="NC_002695.1"/>
</dbReference>
<dbReference type="RefSeq" id="WP_000776191.1">
    <property type="nucleotide sequence ID" value="NZ_VOAI01000012.1"/>
</dbReference>
<dbReference type="SMR" id="P0AD67"/>
<dbReference type="STRING" id="155864.Z0781"/>
<dbReference type="GeneID" id="75205004"/>
<dbReference type="GeneID" id="917034"/>
<dbReference type="KEGG" id="ece:Z0781"/>
<dbReference type="KEGG" id="ecs:ECs_0673"/>
<dbReference type="PATRIC" id="fig|386585.9.peg.785"/>
<dbReference type="eggNOG" id="COG0768">
    <property type="taxonomic scope" value="Bacteria"/>
</dbReference>
<dbReference type="HOGENOM" id="CLU_009289_1_2_6"/>
<dbReference type="OMA" id="WRFGGWP"/>
<dbReference type="UniPathway" id="UPA00219"/>
<dbReference type="Proteomes" id="UP000000558">
    <property type="component" value="Chromosome"/>
</dbReference>
<dbReference type="Proteomes" id="UP000002519">
    <property type="component" value="Chromosome"/>
</dbReference>
<dbReference type="GO" id="GO:0005886">
    <property type="term" value="C:plasma membrane"/>
    <property type="evidence" value="ECO:0007669"/>
    <property type="project" value="UniProtKB-SubCell"/>
</dbReference>
<dbReference type="GO" id="GO:0008658">
    <property type="term" value="F:penicillin binding"/>
    <property type="evidence" value="ECO:0007669"/>
    <property type="project" value="InterPro"/>
</dbReference>
<dbReference type="GO" id="GO:0071972">
    <property type="term" value="F:peptidoglycan L,D-transpeptidase activity"/>
    <property type="evidence" value="ECO:0007669"/>
    <property type="project" value="TreeGrafter"/>
</dbReference>
<dbReference type="GO" id="GO:0009002">
    <property type="term" value="F:serine-type D-Ala-D-Ala carboxypeptidase activity"/>
    <property type="evidence" value="ECO:0007669"/>
    <property type="project" value="UniProtKB-UniRule"/>
</dbReference>
<dbReference type="GO" id="GO:0071555">
    <property type="term" value="P:cell wall organization"/>
    <property type="evidence" value="ECO:0007669"/>
    <property type="project" value="UniProtKB-KW"/>
</dbReference>
<dbReference type="GO" id="GO:0009252">
    <property type="term" value="P:peptidoglycan biosynthetic process"/>
    <property type="evidence" value="ECO:0007669"/>
    <property type="project" value="UniProtKB-UniRule"/>
</dbReference>
<dbReference type="GO" id="GO:0006508">
    <property type="term" value="P:proteolysis"/>
    <property type="evidence" value="ECO:0007669"/>
    <property type="project" value="UniProtKB-KW"/>
</dbReference>
<dbReference type="GO" id="GO:0008360">
    <property type="term" value="P:regulation of cell shape"/>
    <property type="evidence" value="ECO:0007669"/>
    <property type="project" value="UniProtKB-KW"/>
</dbReference>
<dbReference type="FunFam" id="3.30.1390.30:FF:000001">
    <property type="entry name" value="Peptidoglycan D,D-transpeptidase MrdA"/>
    <property type="match status" value="1"/>
</dbReference>
<dbReference type="FunFam" id="3.40.710.10:FF:000004">
    <property type="entry name" value="Peptidoglycan D,D-transpeptidase MrdA"/>
    <property type="match status" value="1"/>
</dbReference>
<dbReference type="FunFam" id="3.90.1310.10:FF:000001">
    <property type="entry name" value="Peptidoglycan D,D-transpeptidase MrdA"/>
    <property type="match status" value="1"/>
</dbReference>
<dbReference type="Gene3D" id="3.40.710.10">
    <property type="entry name" value="DD-peptidase/beta-lactamase superfamily"/>
    <property type="match status" value="1"/>
</dbReference>
<dbReference type="Gene3D" id="3.90.1310.10">
    <property type="entry name" value="Penicillin-binding protein 2a (Domain 2)"/>
    <property type="match status" value="1"/>
</dbReference>
<dbReference type="Gene3D" id="3.30.1390.30">
    <property type="entry name" value="Penicillin-binding protein 2a, domain 3"/>
    <property type="match status" value="1"/>
</dbReference>
<dbReference type="HAMAP" id="MF_02081">
    <property type="entry name" value="MrdA_transpept"/>
    <property type="match status" value="1"/>
</dbReference>
<dbReference type="InterPro" id="IPR050515">
    <property type="entry name" value="Bact_Transpept/Beta-Lactamase"/>
</dbReference>
<dbReference type="InterPro" id="IPR012338">
    <property type="entry name" value="Beta-lactam/transpept-like"/>
</dbReference>
<dbReference type="InterPro" id="IPR005311">
    <property type="entry name" value="PBP_dimer"/>
</dbReference>
<dbReference type="InterPro" id="IPR036138">
    <property type="entry name" value="PBP_dimer_sf"/>
</dbReference>
<dbReference type="InterPro" id="IPR001460">
    <property type="entry name" value="PCN-bd_Tpept"/>
</dbReference>
<dbReference type="InterPro" id="IPR017790">
    <property type="entry name" value="Penicillin-binding_protein_2"/>
</dbReference>
<dbReference type="NCBIfam" id="TIGR03423">
    <property type="entry name" value="pbp2_mrdA"/>
    <property type="match status" value="1"/>
</dbReference>
<dbReference type="NCBIfam" id="NF008061">
    <property type="entry name" value="PRK10795.1"/>
    <property type="match status" value="1"/>
</dbReference>
<dbReference type="PANTHER" id="PTHR30627">
    <property type="entry name" value="PEPTIDOGLYCAN D,D-TRANSPEPTIDASE"/>
    <property type="match status" value="1"/>
</dbReference>
<dbReference type="PANTHER" id="PTHR30627:SF2">
    <property type="entry name" value="PEPTIDOGLYCAN D,D-TRANSPEPTIDASE MRDA"/>
    <property type="match status" value="1"/>
</dbReference>
<dbReference type="Pfam" id="PF03717">
    <property type="entry name" value="PBP_dimer"/>
    <property type="match status" value="1"/>
</dbReference>
<dbReference type="Pfam" id="PF00905">
    <property type="entry name" value="Transpeptidase"/>
    <property type="match status" value="1"/>
</dbReference>
<dbReference type="SUPFAM" id="SSF56601">
    <property type="entry name" value="beta-lactamase/transpeptidase-like"/>
    <property type="match status" value="1"/>
</dbReference>
<dbReference type="SUPFAM" id="SSF56519">
    <property type="entry name" value="Penicillin binding protein dimerisation domain"/>
    <property type="match status" value="1"/>
</dbReference>
<sequence>MKLQNSFRDYTAESALFVRRALVAFLGILLLTGVLIANLYNLQIVRFTDYQTRSNENRIKLVPIAPSRGIIYDRNGIPLALNRTIYQIEMMPEKVDNVQQTLDALRSVVDLTDDDIAAFRKERARSHRFTSIPVKTNLTEVQVARFAVNQYRFPGVEVKGYKRRYYPYGSALTHVIGYVSKINDKDVERLNNDGKLANYAATHDIGKLGIERYYEDVLHGQTGYEEVEVNNRGRVIRQLKEVPPQAGHDIYLTLDLKLQQYIETLLAGSRAAVVVTDPRTGGVLALVSTPSYDPNLFVDGISSKDYSALLNDPNTPLVNRATQGVYPPASTVKPYVAVSALSAGVITRNTTLFDPGWWQLPGSEKRYRDWKKWGHGRLNVTRSLEESADTFFYQVAYDMGIDRLSEWMGKFGYGHYTGIDLAEERSGNMPTREWKQKRFKKPWYQGDTIPVGIGQGYWTATPIQMSKALMILINDGIVKVPHLLMSTAEDGKQVPWVQPHEPPVGDIHSGYWELAKDGMYGVANRPNGTAHKYFASAPYKIAAKSGTAQVFGLKANETYNAHKIAERLRDHKLMTAFAPYNNPQVAVAMILENGGAGPAVGTLMRQILDHIMLGDNNTDLPAENPAVAAAEDH</sequence>
<gene>
    <name evidence="1" type="primary">mrdA</name>
    <name type="synonym">pbpA</name>
    <name type="ordered locus">Z0781</name>
    <name type="ordered locus">ECs0673</name>
</gene>
<keyword id="KW-0121">Carboxypeptidase</keyword>
<keyword id="KW-0997">Cell inner membrane</keyword>
<keyword id="KW-1003">Cell membrane</keyword>
<keyword id="KW-0133">Cell shape</keyword>
<keyword id="KW-0961">Cell wall biogenesis/degradation</keyword>
<keyword id="KW-0378">Hydrolase</keyword>
<keyword id="KW-0472">Membrane</keyword>
<keyword id="KW-0573">Peptidoglycan synthesis</keyword>
<keyword id="KW-0645">Protease</keyword>
<keyword id="KW-1185">Reference proteome</keyword>
<keyword id="KW-0812">Transmembrane</keyword>
<keyword id="KW-1133">Transmembrane helix</keyword>
<name>MRDA_ECO57</name>